<name>GATB_NEOFI</name>
<dbReference type="EC" id="6.3.5.-" evidence="1"/>
<dbReference type="EMBL" id="DS027690">
    <property type="protein sequence ID" value="EAW21422.1"/>
    <property type="molecule type" value="Genomic_DNA"/>
</dbReference>
<dbReference type="RefSeq" id="XP_001263319.1">
    <property type="nucleotide sequence ID" value="XM_001263318.1"/>
</dbReference>
<dbReference type="SMR" id="A1D6S8"/>
<dbReference type="STRING" id="331117.A1D6S8"/>
<dbReference type="EnsemblFungi" id="EAW21422">
    <property type="protein sequence ID" value="EAW21422"/>
    <property type="gene ID" value="NFIA_065860"/>
</dbReference>
<dbReference type="GeneID" id="4589934"/>
<dbReference type="KEGG" id="nfi:NFIA_065860"/>
<dbReference type="VEuPathDB" id="FungiDB:NFIA_065860"/>
<dbReference type="eggNOG" id="KOG2438">
    <property type="taxonomic scope" value="Eukaryota"/>
</dbReference>
<dbReference type="HOGENOM" id="CLU_019240_4_1_1"/>
<dbReference type="OMA" id="ARKWWMG"/>
<dbReference type="OrthoDB" id="1722066at2759"/>
<dbReference type="Proteomes" id="UP000006702">
    <property type="component" value="Unassembled WGS sequence"/>
</dbReference>
<dbReference type="GO" id="GO:0030956">
    <property type="term" value="C:glutamyl-tRNA(Gln) amidotransferase complex"/>
    <property type="evidence" value="ECO:0007669"/>
    <property type="project" value="UniProtKB-UniRule"/>
</dbReference>
<dbReference type="GO" id="GO:0005739">
    <property type="term" value="C:mitochondrion"/>
    <property type="evidence" value="ECO:0007669"/>
    <property type="project" value="UniProtKB-SubCell"/>
</dbReference>
<dbReference type="GO" id="GO:0005524">
    <property type="term" value="F:ATP binding"/>
    <property type="evidence" value="ECO:0007669"/>
    <property type="project" value="UniProtKB-KW"/>
</dbReference>
<dbReference type="GO" id="GO:0050567">
    <property type="term" value="F:glutaminyl-tRNA synthase (glutamine-hydrolyzing) activity"/>
    <property type="evidence" value="ECO:0007669"/>
    <property type="project" value="UniProtKB-UniRule"/>
</dbReference>
<dbReference type="GO" id="GO:0070681">
    <property type="term" value="P:glutaminyl-tRNAGln biosynthesis via transamidation"/>
    <property type="evidence" value="ECO:0007669"/>
    <property type="project" value="UniProtKB-UniRule"/>
</dbReference>
<dbReference type="GO" id="GO:0032543">
    <property type="term" value="P:mitochondrial translation"/>
    <property type="evidence" value="ECO:0007669"/>
    <property type="project" value="UniProtKB-UniRule"/>
</dbReference>
<dbReference type="Gene3D" id="1.10.10.410">
    <property type="match status" value="1"/>
</dbReference>
<dbReference type="HAMAP" id="MF_00121">
    <property type="entry name" value="GatB"/>
    <property type="match status" value="1"/>
</dbReference>
<dbReference type="InterPro" id="IPR017959">
    <property type="entry name" value="Asn/Gln-tRNA_amidoTrfase_suB/E"/>
</dbReference>
<dbReference type="InterPro" id="IPR006075">
    <property type="entry name" value="Asn/Gln-tRNA_Trfase_suB/E_cat"/>
</dbReference>
<dbReference type="InterPro" id="IPR018027">
    <property type="entry name" value="Asn/Gln_amidotransferase"/>
</dbReference>
<dbReference type="InterPro" id="IPR003789">
    <property type="entry name" value="Asn/Gln_tRNA_amidoTrase-B-like"/>
</dbReference>
<dbReference type="InterPro" id="IPR004413">
    <property type="entry name" value="GatB"/>
</dbReference>
<dbReference type="InterPro" id="IPR023168">
    <property type="entry name" value="GatB_Yqey_C_2"/>
</dbReference>
<dbReference type="InterPro" id="IPR017958">
    <property type="entry name" value="Gln-tRNA_amidoTrfase_suB_CS"/>
</dbReference>
<dbReference type="InterPro" id="IPR014746">
    <property type="entry name" value="Gln_synth/guanido_kin_cat_dom"/>
</dbReference>
<dbReference type="NCBIfam" id="TIGR00133">
    <property type="entry name" value="gatB"/>
    <property type="match status" value="1"/>
</dbReference>
<dbReference type="NCBIfam" id="NF004012">
    <property type="entry name" value="PRK05477.1-2"/>
    <property type="match status" value="1"/>
</dbReference>
<dbReference type="PANTHER" id="PTHR11659">
    <property type="entry name" value="GLUTAMYL-TRNA GLN AMIDOTRANSFERASE SUBUNIT B MITOCHONDRIAL AND PROKARYOTIC PET112-RELATED"/>
    <property type="match status" value="1"/>
</dbReference>
<dbReference type="PANTHER" id="PTHR11659:SF0">
    <property type="entry name" value="GLUTAMYL-TRNA(GLN) AMIDOTRANSFERASE SUBUNIT B, MITOCHONDRIAL"/>
    <property type="match status" value="1"/>
</dbReference>
<dbReference type="Pfam" id="PF02934">
    <property type="entry name" value="GatB_N"/>
    <property type="match status" value="1"/>
</dbReference>
<dbReference type="Pfam" id="PF02637">
    <property type="entry name" value="GatB_Yqey"/>
    <property type="match status" value="1"/>
</dbReference>
<dbReference type="SMART" id="SM00845">
    <property type="entry name" value="GatB_Yqey"/>
    <property type="match status" value="1"/>
</dbReference>
<dbReference type="SUPFAM" id="SSF89095">
    <property type="entry name" value="GatB/YqeY motif"/>
    <property type="match status" value="1"/>
</dbReference>
<dbReference type="SUPFAM" id="SSF55931">
    <property type="entry name" value="Glutamine synthetase/guanido kinase"/>
    <property type="match status" value="1"/>
</dbReference>
<dbReference type="PROSITE" id="PS01234">
    <property type="entry name" value="GATB"/>
    <property type="match status" value="1"/>
</dbReference>
<gene>
    <name type="ORF">NFIA_065860</name>
</gene>
<evidence type="ECO:0000255" key="1">
    <source>
        <dbReference type="HAMAP-Rule" id="MF_03147"/>
    </source>
</evidence>
<protein>
    <recommendedName>
        <fullName evidence="1">Glutamyl-tRNA(Gln) amidotransferase subunit B, mitochondrial</fullName>
        <shortName evidence="1">Glu-AdT subunit B</shortName>
        <ecNumber evidence="1">6.3.5.-</ecNumber>
    </recommendedName>
</protein>
<sequence>MLQQWLRQSPGAARFLRGSCCRGPQSGSLRHSPLPTAPHRCIRSLQTSATESKEHIPLRKQLKQNAKALKAQKRQKRESEEASRQKWELTVGIEIHAQLNTETKLFSRASTSNTDTPNSNVALFDLAFPGSQPEFQATTLLPALRAAIALNCDIQPVSRFDRKHYFYHDQPAGYQITQYYAPFAKNGYVDLFPHDGIAPEDGDHVRIGIKQIQLEQDTAKSQEYPPSTQLLDFNRVSHPLIEIITMPQIHNPATAAACVRKIQAILQSCSAVTTGMELGGLRADVNVSIRRRDEAPGTHQYGGIGGLGQRTEIKNLSSFKAVEDAVIAEKNRQIAVLESGGVIEGETRGWTIGSTETRKLRGKEGEVDYRYMPDPDLPPLIISHDLVSGLRDSLPTPPDQLIEMLAGPEYGLSIEDAKPLIELDDGARLEYYQDVVDILRDLQQDQDAKSRAGLARMAGNWVLHELGGLCAKADLAWDAQRVPAETLAQIIDQLQRKRITGATAKQVLAMVFDGDRRPVPQLLEAENLLLRPLSRDEYIALAEAAISQNPQMVEQIRAKNQLGKLGWFVGQMMRMGEKGRVEAQKADEILRELILGKSDQP</sequence>
<organism>
    <name type="scientific">Neosartorya fischeri (strain ATCC 1020 / DSM 3700 / CBS 544.65 / FGSC A1164 / JCM 1740 / NRRL 181 / WB 181)</name>
    <name type="common">Aspergillus fischerianus</name>
    <dbReference type="NCBI Taxonomy" id="331117"/>
    <lineage>
        <taxon>Eukaryota</taxon>
        <taxon>Fungi</taxon>
        <taxon>Dikarya</taxon>
        <taxon>Ascomycota</taxon>
        <taxon>Pezizomycotina</taxon>
        <taxon>Eurotiomycetes</taxon>
        <taxon>Eurotiomycetidae</taxon>
        <taxon>Eurotiales</taxon>
        <taxon>Aspergillaceae</taxon>
        <taxon>Aspergillus</taxon>
        <taxon>Aspergillus subgen. Fumigati</taxon>
    </lineage>
</organism>
<accession>A1D6S8</accession>
<comment type="function">
    <text evidence="1">Allows the formation of correctly charged Gln-tRNA(Gln) through the transamidation of misacylated Glu-tRNA(Gln) in the mitochondria. The reaction takes place in the presence of glutamine and ATP through an activated gamma-phospho-Glu-tRNA(Gln).</text>
</comment>
<comment type="catalytic activity">
    <reaction evidence="1">
        <text>L-glutamyl-tRNA(Gln) + L-glutamine + ATP + H2O = L-glutaminyl-tRNA(Gln) + L-glutamate + ADP + phosphate + H(+)</text>
        <dbReference type="Rhea" id="RHEA:17521"/>
        <dbReference type="Rhea" id="RHEA-COMP:9681"/>
        <dbReference type="Rhea" id="RHEA-COMP:9684"/>
        <dbReference type="ChEBI" id="CHEBI:15377"/>
        <dbReference type="ChEBI" id="CHEBI:15378"/>
        <dbReference type="ChEBI" id="CHEBI:29985"/>
        <dbReference type="ChEBI" id="CHEBI:30616"/>
        <dbReference type="ChEBI" id="CHEBI:43474"/>
        <dbReference type="ChEBI" id="CHEBI:58359"/>
        <dbReference type="ChEBI" id="CHEBI:78520"/>
        <dbReference type="ChEBI" id="CHEBI:78521"/>
        <dbReference type="ChEBI" id="CHEBI:456216"/>
    </reaction>
</comment>
<comment type="subunit">
    <text evidence="1">Subunit of the heterotrimeric GatCAB amidotransferase (AdT) complex, composed of A, B and C subunits.</text>
</comment>
<comment type="subcellular location">
    <subcellularLocation>
        <location evidence="1">Mitochondrion</location>
    </subcellularLocation>
</comment>
<comment type="similarity">
    <text evidence="1">Belongs to the GatB/GatE family. GatB subfamily.</text>
</comment>
<reference key="1">
    <citation type="journal article" date="2008" name="PLoS Genet.">
        <title>Genomic islands in the pathogenic filamentous fungus Aspergillus fumigatus.</title>
        <authorList>
            <person name="Fedorova N.D."/>
            <person name="Khaldi N."/>
            <person name="Joardar V.S."/>
            <person name="Maiti R."/>
            <person name="Amedeo P."/>
            <person name="Anderson M.J."/>
            <person name="Crabtree J."/>
            <person name="Silva J.C."/>
            <person name="Badger J.H."/>
            <person name="Albarraq A."/>
            <person name="Angiuoli S."/>
            <person name="Bussey H."/>
            <person name="Bowyer P."/>
            <person name="Cotty P.J."/>
            <person name="Dyer P.S."/>
            <person name="Egan A."/>
            <person name="Galens K."/>
            <person name="Fraser-Liggett C.M."/>
            <person name="Haas B.J."/>
            <person name="Inman J.M."/>
            <person name="Kent R."/>
            <person name="Lemieux S."/>
            <person name="Malavazi I."/>
            <person name="Orvis J."/>
            <person name="Roemer T."/>
            <person name="Ronning C.M."/>
            <person name="Sundaram J.P."/>
            <person name="Sutton G."/>
            <person name="Turner G."/>
            <person name="Venter J.C."/>
            <person name="White O.R."/>
            <person name="Whitty B.R."/>
            <person name="Youngman P."/>
            <person name="Wolfe K.H."/>
            <person name="Goldman G.H."/>
            <person name="Wortman J.R."/>
            <person name="Jiang B."/>
            <person name="Denning D.W."/>
            <person name="Nierman W.C."/>
        </authorList>
    </citation>
    <scope>NUCLEOTIDE SEQUENCE [LARGE SCALE GENOMIC DNA]</scope>
    <source>
        <strain>ATCC 1020 / DSM 3700 / CBS 544.65 / FGSC A1164 / JCM 1740 / NRRL 181 / WB 181</strain>
    </source>
</reference>
<keyword id="KW-0067">ATP-binding</keyword>
<keyword id="KW-0436">Ligase</keyword>
<keyword id="KW-0496">Mitochondrion</keyword>
<keyword id="KW-0547">Nucleotide-binding</keyword>
<keyword id="KW-0648">Protein biosynthesis</keyword>
<keyword id="KW-1185">Reference proteome</keyword>
<keyword id="KW-0809">Transit peptide</keyword>
<feature type="transit peptide" description="Mitochondrion" evidence="1">
    <location>
        <begin position="1"/>
        <end position="52"/>
    </location>
</feature>
<feature type="chain" id="PRO_0000413264" description="Glutamyl-tRNA(Gln) amidotransferase subunit B, mitochondrial">
    <location>
        <begin position="53"/>
        <end position="601"/>
    </location>
</feature>
<proteinExistence type="inferred from homology"/>